<evidence type="ECO:0000255" key="1">
    <source>
        <dbReference type="HAMAP-Rule" id="MF_00380"/>
    </source>
</evidence>
<sequence length="99" mass="11307">MALTKAEMVERLFDEVGLNKREAKEFVDAFFDLLRDALEQGKEIKLSGFGNFELRCKNQRPGRNPKTGEEIPISARTVVTFRSGQKLKERVDAYVGSRQ</sequence>
<keyword id="KW-0233">DNA recombination</keyword>
<keyword id="KW-0238">DNA-binding</keyword>
<keyword id="KW-1185">Reference proteome</keyword>
<keyword id="KW-0804">Transcription</keyword>
<keyword id="KW-0805">Transcription regulation</keyword>
<keyword id="KW-0810">Translation regulation</keyword>
<dbReference type="EMBL" id="AE009442">
    <property type="protein sequence ID" value="AAO29740.1"/>
    <property type="molecule type" value="Genomic_DNA"/>
</dbReference>
<dbReference type="RefSeq" id="WP_004084568.1">
    <property type="nucleotide sequence ID" value="NC_004556.1"/>
</dbReference>
<dbReference type="SMR" id="Q87AB7"/>
<dbReference type="KEGG" id="xft:PD_1910"/>
<dbReference type="HOGENOM" id="CLU_105066_1_3_6"/>
<dbReference type="Proteomes" id="UP000002516">
    <property type="component" value="Chromosome"/>
</dbReference>
<dbReference type="GO" id="GO:0005829">
    <property type="term" value="C:cytosol"/>
    <property type="evidence" value="ECO:0007669"/>
    <property type="project" value="TreeGrafter"/>
</dbReference>
<dbReference type="GO" id="GO:0003677">
    <property type="term" value="F:DNA binding"/>
    <property type="evidence" value="ECO:0007669"/>
    <property type="project" value="UniProtKB-UniRule"/>
</dbReference>
<dbReference type="GO" id="GO:0030527">
    <property type="term" value="F:structural constituent of chromatin"/>
    <property type="evidence" value="ECO:0007669"/>
    <property type="project" value="InterPro"/>
</dbReference>
<dbReference type="GO" id="GO:0006310">
    <property type="term" value="P:DNA recombination"/>
    <property type="evidence" value="ECO:0007669"/>
    <property type="project" value="UniProtKB-UniRule"/>
</dbReference>
<dbReference type="GO" id="GO:0009893">
    <property type="term" value="P:positive regulation of metabolic process"/>
    <property type="evidence" value="ECO:0007669"/>
    <property type="project" value="UniProtKB-ARBA"/>
</dbReference>
<dbReference type="GO" id="GO:0006355">
    <property type="term" value="P:regulation of DNA-templated transcription"/>
    <property type="evidence" value="ECO:0007669"/>
    <property type="project" value="UniProtKB-UniRule"/>
</dbReference>
<dbReference type="GO" id="GO:0006417">
    <property type="term" value="P:regulation of translation"/>
    <property type="evidence" value="ECO:0007669"/>
    <property type="project" value="UniProtKB-UniRule"/>
</dbReference>
<dbReference type="CDD" id="cd13835">
    <property type="entry name" value="IHF_A"/>
    <property type="match status" value="1"/>
</dbReference>
<dbReference type="FunFam" id="4.10.520.10:FF:000002">
    <property type="entry name" value="Integration host factor subunit alpha"/>
    <property type="match status" value="1"/>
</dbReference>
<dbReference type="Gene3D" id="4.10.520.10">
    <property type="entry name" value="IHF-like DNA-binding proteins"/>
    <property type="match status" value="1"/>
</dbReference>
<dbReference type="HAMAP" id="MF_00380">
    <property type="entry name" value="IHF_alpha"/>
    <property type="match status" value="1"/>
</dbReference>
<dbReference type="InterPro" id="IPR000119">
    <property type="entry name" value="Hist_DNA-bd"/>
</dbReference>
<dbReference type="InterPro" id="IPR020816">
    <property type="entry name" value="Histone-like_DNA-bd_CS"/>
</dbReference>
<dbReference type="InterPro" id="IPR010992">
    <property type="entry name" value="IHF-like_DNA-bd_dom_sf"/>
</dbReference>
<dbReference type="InterPro" id="IPR005684">
    <property type="entry name" value="IHF_alpha"/>
</dbReference>
<dbReference type="NCBIfam" id="TIGR00987">
    <property type="entry name" value="himA"/>
    <property type="match status" value="1"/>
</dbReference>
<dbReference type="NCBIfam" id="NF001401">
    <property type="entry name" value="PRK00285.1"/>
    <property type="match status" value="1"/>
</dbReference>
<dbReference type="PANTHER" id="PTHR33175">
    <property type="entry name" value="DNA-BINDING PROTEIN HU"/>
    <property type="match status" value="1"/>
</dbReference>
<dbReference type="PANTHER" id="PTHR33175:SF2">
    <property type="entry name" value="INTEGRATION HOST FACTOR SUBUNIT ALPHA"/>
    <property type="match status" value="1"/>
</dbReference>
<dbReference type="Pfam" id="PF00216">
    <property type="entry name" value="Bac_DNA_binding"/>
    <property type="match status" value="1"/>
</dbReference>
<dbReference type="PRINTS" id="PR01727">
    <property type="entry name" value="DNABINDINGHU"/>
</dbReference>
<dbReference type="SMART" id="SM00411">
    <property type="entry name" value="BHL"/>
    <property type="match status" value="1"/>
</dbReference>
<dbReference type="SUPFAM" id="SSF47729">
    <property type="entry name" value="IHF-like DNA-binding proteins"/>
    <property type="match status" value="1"/>
</dbReference>
<dbReference type="PROSITE" id="PS00045">
    <property type="entry name" value="HISTONE_LIKE"/>
    <property type="match status" value="1"/>
</dbReference>
<organism>
    <name type="scientific">Xylella fastidiosa (strain Temecula1 / ATCC 700964)</name>
    <dbReference type="NCBI Taxonomy" id="183190"/>
    <lineage>
        <taxon>Bacteria</taxon>
        <taxon>Pseudomonadati</taxon>
        <taxon>Pseudomonadota</taxon>
        <taxon>Gammaproteobacteria</taxon>
        <taxon>Lysobacterales</taxon>
        <taxon>Lysobacteraceae</taxon>
        <taxon>Xylella</taxon>
    </lineage>
</organism>
<proteinExistence type="inferred from homology"/>
<reference key="1">
    <citation type="journal article" date="2003" name="J. Bacteriol.">
        <title>Comparative analyses of the complete genome sequences of Pierce's disease and citrus variegated chlorosis strains of Xylella fastidiosa.</title>
        <authorList>
            <person name="Van Sluys M.A."/>
            <person name="de Oliveira M.C."/>
            <person name="Monteiro-Vitorello C.B."/>
            <person name="Miyaki C.Y."/>
            <person name="Furlan L.R."/>
            <person name="Camargo L.E.A."/>
            <person name="da Silva A.C.R."/>
            <person name="Moon D.H."/>
            <person name="Takita M.A."/>
            <person name="Lemos E.G.M."/>
            <person name="Machado M.A."/>
            <person name="Ferro M.I.T."/>
            <person name="da Silva F.R."/>
            <person name="Goldman M.H.S."/>
            <person name="Goldman G.H."/>
            <person name="Lemos M.V.F."/>
            <person name="El-Dorry H."/>
            <person name="Tsai S.M."/>
            <person name="Carrer H."/>
            <person name="Carraro D.M."/>
            <person name="de Oliveira R.C."/>
            <person name="Nunes L.R."/>
            <person name="Siqueira W.J."/>
            <person name="Coutinho L.L."/>
            <person name="Kimura E.T."/>
            <person name="Ferro E.S."/>
            <person name="Harakava R."/>
            <person name="Kuramae E.E."/>
            <person name="Marino C.L."/>
            <person name="Giglioti E."/>
            <person name="Abreu I.L."/>
            <person name="Alves L.M.C."/>
            <person name="do Amaral A.M."/>
            <person name="Baia G.S."/>
            <person name="Blanco S.R."/>
            <person name="Brito M.S."/>
            <person name="Cannavan F.S."/>
            <person name="Celestino A.V."/>
            <person name="da Cunha A.F."/>
            <person name="Fenille R.C."/>
            <person name="Ferro J.A."/>
            <person name="Formighieri E.F."/>
            <person name="Kishi L.T."/>
            <person name="Leoni S.G."/>
            <person name="Oliveira A.R."/>
            <person name="Rosa V.E. Jr."/>
            <person name="Sassaki F.T."/>
            <person name="Sena J.A.D."/>
            <person name="de Souza A.A."/>
            <person name="Truffi D."/>
            <person name="Tsukumo F."/>
            <person name="Yanai G.M."/>
            <person name="Zaros L.G."/>
            <person name="Civerolo E.L."/>
            <person name="Simpson A.J.G."/>
            <person name="Almeida N.F. Jr."/>
            <person name="Setubal J.C."/>
            <person name="Kitajima J.P."/>
        </authorList>
    </citation>
    <scope>NUCLEOTIDE SEQUENCE [LARGE SCALE GENOMIC DNA]</scope>
    <source>
        <strain>Temecula1 / ATCC 700964</strain>
    </source>
</reference>
<protein>
    <recommendedName>
        <fullName evidence="1">Integration host factor subunit alpha</fullName>
        <shortName evidence="1">IHF-alpha</shortName>
    </recommendedName>
</protein>
<comment type="function">
    <text evidence="1">This protein is one of the two subunits of integration host factor, a specific DNA-binding protein that functions in genetic recombination as well as in transcriptional and translational control.</text>
</comment>
<comment type="subunit">
    <text evidence="1">Heterodimer of an alpha and a beta chain.</text>
</comment>
<comment type="similarity">
    <text evidence="1">Belongs to the bacterial histone-like protein family.</text>
</comment>
<gene>
    <name evidence="1" type="primary">ihfA</name>
    <name evidence="1" type="synonym">himA</name>
    <name type="ordered locus">PD_1910</name>
</gene>
<name>IHFA_XYLFT</name>
<accession>Q87AB7</accession>
<feature type="chain" id="PRO_0000105036" description="Integration host factor subunit alpha">
    <location>
        <begin position="1"/>
        <end position="99"/>
    </location>
</feature>